<sequence length="492" mass="57231">MLFKNTLAYYNFSITYTQDYKNTPRLNTRVLHPSCKITSSLKKTQYLKSKVKHKMFFCTNMYSPQLNHVLQLVFDCNHIVPNSYQEITLKCRISSTKPGILFITDGTESETEDVLFDVQFLENTMTIKIKILPISRTVPVRIHLFSIPIYLPSPALEIDDINALCQKENIDPIVYEQYGLTNMPISTTNVINQFKVVSNDSVETSLILLNLSWTESPYQSQKLDRYGRKLLIVFSVFSIDTRKCSYWKNLFKSMIPLCRVNMISEPGISIYKIEFNDPFLTIFLRNVVLPENERRFPITKECYLRLTFSPPNRSTVTLNMNMPYFKICADGKSLEVFFPSDMSLVINTNKEITLRGKFTNKKIVGIFIPVQTHVFKLYPFLWFAQEPLKLRISCEKTVSVTEHDMLGRIFFVTKKLFRKPFRSLSNSDMKSLLTHTENTDKPFEVHFMGNCFPAYLLPELTLHPLEYEDKPARGNPQILPSVEKHSIIKMRI</sequence>
<dbReference type="EMBL" id="AF157706">
    <property type="protein sequence ID" value="AAD49658.1"/>
    <property type="molecule type" value="Genomic_DNA"/>
</dbReference>
<dbReference type="RefSeq" id="NP_050236.1">
    <property type="nucleotide sequence ID" value="NC_000898.1"/>
</dbReference>
<dbReference type="DNASU" id="1497057"/>
<dbReference type="GeneID" id="1497057"/>
<dbReference type="KEGG" id="vg:1497057"/>
<dbReference type="Proteomes" id="UP000006930">
    <property type="component" value="Segment"/>
</dbReference>
<dbReference type="InterPro" id="IPR009479">
    <property type="entry name" value="Herpes_U55"/>
</dbReference>
<dbReference type="Pfam" id="PF06501">
    <property type="entry name" value="Herpes_U55"/>
    <property type="match status" value="1"/>
</dbReference>
<feature type="chain" id="PRO_0000408456" description="Uncharacterized protein U55">
    <location>
        <begin position="1"/>
        <end position="492"/>
    </location>
</feature>
<reference key="1">
    <citation type="journal article" date="1999" name="J. Virol.">
        <title>Human herpesvirus 6B genome sequence: coding content and comparison with human herpesvirus 6A.</title>
        <authorList>
            <person name="Dominguez G."/>
            <person name="Dambaugh T.R."/>
            <person name="Stamey F.R."/>
            <person name="Dewhurst S."/>
            <person name="Inoue N."/>
            <person name="Pellett P.E."/>
        </authorList>
    </citation>
    <scope>NUCLEOTIDE SEQUENCE [LARGE SCALE GENOMIC DNA]</scope>
</reference>
<protein>
    <recommendedName>
        <fullName>Uncharacterized protein U55</fullName>
    </recommendedName>
</protein>
<keyword id="KW-1185">Reference proteome</keyword>
<name>VU55_HHV6Z</name>
<proteinExistence type="predicted"/>
<organism>
    <name type="scientific">Human herpesvirus 6B (strain Z29)</name>
    <name type="common">HHV-6 variant B</name>
    <name type="synonym">Human B lymphotropic virus</name>
    <dbReference type="NCBI Taxonomy" id="36351"/>
    <lineage>
        <taxon>Viruses</taxon>
        <taxon>Duplodnaviria</taxon>
        <taxon>Heunggongvirae</taxon>
        <taxon>Peploviricota</taxon>
        <taxon>Herviviricetes</taxon>
        <taxon>Herpesvirales</taxon>
        <taxon>Orthoherpesviridae</taxon>
        <taxon>Betaherpesvirinae</taxon>
        <taxon>Roseolovirus</taxon>
        <taxon>Roseolovirus humanbeta6b</taxon>
        <taxon>Human herpesvirus 6B</taxon>
    </lineage>
</organism>
<gene>
    <name type="primary">U55</name>
</gene>
<organismHost>
    <name type="scientific">Homo sapiens</name>
    <name type="common">Human</name>
    <dbReference type="NCBI Taxonomy" id="9606"/>
</organismHost>
<accession>Q9QJ28</accession>